<evidence type="ECO:0000255" key="1">
    <source>
        <dbReference type="HAMAP-Rule" id="MF_00268"/>
    </source>
</evidence>
<evidence type="ECO:0000256" key="2">
    <source>
        <dbReference type="SAM" id="MobiDB-lite"/>
    </source>
</evidence>
<protein>
    <recommendedName>
        <fullName evidence="1">Protein RecA</fullName>
    </recommendedName>
    <alternativeName>
        <fullName evidence="1">Recombinase A</fullName>
    </alternativeName>
</protein>
<feature type="chain" id="PRO_1000048025" description="Protein RecA">
    <location>
        <begin position="1"/>
        <end position="376"/>
    </location>
</feature>
<feature type="region of interest" description="Disordered" evidence="2">
    <location>
        <begin position="357"/>
        <end position="376"/>
    </location>
</feature>
<feature type="binding site" evidence="1">
    <location>
        <begin position="79"/>
        <end position="86"/>
    </location>
    <ligand>
        <name>ATP</name>
        <dbReference type="ChEBI" id="CHEBI:30616"/>
    </ligand>
</feature>
<reference key="1">
    <citation type="submission" date="2005-08" db="EMBL/GenBank/DDBJ databases">
        <title>Complete sequence of Synechococcus sp. CC9902.</title>
        <authorList>
            <person name="Copeland A."/>
            <person name="Lucas S."/>
            <person name="Lapidus A."/>
            <person name="Barry K."/>
            <person name="Detter J.C."/>
            <person name="Glavina T."/>
            <person name="Hammon N."/>
            <person name="Israni S."/>
            <person name="Pitluck S."/>
            <person name="Martinez M."/>
            <person name="Schmutz J."/>
            <person name="Larimer F."/>
            <person name="Land M."/>
            <person name="Kyrpides N."/>
            <person name="Ivanova N."/>
            <person name="Richardson P."/>
        </authorList>
    </citation>
    <scope>NUCLEOTIDE SEQUENCE [LARGE SCALE GENOMIC DNA]</scope>
    <source>
        <strain>CC9902</strain>
    </source>
</reference>
<keyword id="KW-0067">ATP-binding</keyword>
<keyword id="KW-0963">Cytoplasm</keyword>
<keyword id="KW-0227">DNA damage</keyword>
<keyword id="KW-0233">DNA recombination</keyword>
<keyword id="KW-0234">DNA repair</keyword>
<keyword id="KW-0238">DNA-binding</keyword>
<keyword id="KW-0547">Nucleotide-binding</keyword>
<keyword id="KW-1185">Reference proteome</keyword>
<keyword id="KW-0742">SOS response</keyword>
<name>RECA_SYNS9</name>
<sequence>MPADMKTTAPGSDARSSGERDKALNLVLGQIERNFGKGSIMRLGDASRMRVETISTGALTLDLALGGGYPKGRVVEIYGPESSGKTTLTLHAIAEVQKRGGVAAFVDAEHALDPHYAASLGVDVENLLVSQPDTGEMALEIVDQLVRSAAVDIVVIDSVAALTPRSEIEGEMGDVSVGAQARLMSQAMRKITGNIGKSGCTVIFLNQLRLKIGVMYGNPETTTGGNALKFYASVRLDIRRIQTLKKGTEEFGIRAKVKVAKNKVAPPFRIAEFDILFGRGISTVGCLLDLAEETGVVVRKGAWYSYEGDNIGQGRDNTIVWMEQNPEAATTIETLVRQKLNEGTEVTANTVKSLEPAAARAATDKPVETKGANAAA</sequence>
<dbReference type="EMBL" id="CP000097">
    <property type="protein sequence ID" value="ABB26906.1"/>
    <property type="molecule type" value="Genomic_DNA"/>
</dbReference>
<dbReference type="RefSeq" id="WP_011360708.1">
    <property type="nucleotide sequence ID" value="NC_007513.1"/>
</dbReference>
<dbReference type="SMR" id="Q3AUV9"/>
<dbReference type="STRING" id="316279.Syncc9902_1949"/>
<dbReference type="KEGG" id="sye:Syncc9902_1949"/>
<dbReference type="eggNOG" id="COG0468">
    <property type="taxonomic scope" value="Bacteria"/>
</dbReference>
<dbReference type="HOGENOM" id="CLU_040469_3_2_3"/>
<dbReference type="OrthoDB" id="9776733at2"/>
<dbReference type="Proteomes" id="UP000002712">
    <property type="component" value="Chromosome"/>
</dbReference>
<dbReference type="GO" id="GO:0005829">
    <property type="term" value="C:cytosol"/>
    <property type="evidence" value="ECO:0007669"/>
    <property type="project" value="TreeGrafter"/>
</dbReference>
<dbReference type="GO" id="GO:0005524">
    <property type="term" value="F:ATP binding"/>
    <property type="evidence" value="ECO:0007669"/>
    <property type="project" value="UniProtKB-UniRule"/>
</dbReference>
<dbReference type="GO" id="GO:0016887">
    <property type="term" value="F:ATP hydrolysis activity"/>
    <property type="evidence" value="ECO:0007669"/>
    <property type="project" value="InterPro"/>
</dbReference>
<dbReference type="GO" id="GO:0140664">
    <property type="term" value="F:ATP-dependent DNA damage sensor activity"/>
    <property type="evidence" value="ECO:0007669"/>
    <property type="project" value="InterPro"/>
</dbReference>
<dbReference type="GO" id="GO:0003684">
    <property type="term" value="F:damaged DNA binding"/>
    <property type="evidence" value="ECO:0007669"/>
    <property type="project" value="UniProtKB-UniRule"/>
</dbReference>
<dbReference type="GO" id="GO:0003697">
    <property type="term" value="F:single-stranded DNA binding"/>
    <property type="evidence" value="ECO:0007669"/>
    <property type="project" value="UniProtKB-UniRule"/>
</dbReference>
<dbReference type="GO" id="GO:0006310">
    <property type="term" value="P:DNA recombination"/>
    <property type="evidence" value="ECO:0007669"/>
    <property type="project" value="UniProtKB-UniRule"/>
</dbReference>
<dbReference type="GO" id="GO:0006281">
    <property type="term" value="P:DNA repair"/>
    <property type="evidence" value="ECO:0007669"/>
    <property type="project" value="UniProtKB-UniRule"/>
</dbReference>
<dbReference type="GO" id="GO:0009432">
    <property type="term" value="P:SOS response"/>
    <property type="evidence" value="ECO:0007669"/>
    <property type="project" value="UniProtKB-UniRule"/>
</dbReference>
<dbReference type="CDD" id="cd00983">
    <property type="entry name" value="RecA"/>
    <property type="match status" value="1"/>
</dbReference>
<dbReference type="FunFam" id="3.40.50.300:FF:000087">
    <property type="entry name" value="Recombinase RecA"/>
    <property type="match status" value="1"/>
</dbReference>
<dbReference type="Gene3D" id="3.40.50.300">
    <property type="entry name" value="P-loop containing nucleotide triphosphate hydrolases"/>
    <property type="match status" value="1"/>
</dbReference>
<dbReference type="HAMAP" id="MF_00268">
    <property type="entry name" value="RecA"/>
    <property type="match status" value="1"/>
</dbReference>
<dbReference type="InterPro" id="IPR003593">
    <property type="entry name" value="AAA+_ATPase"/>
</dbReference>
<dbReference type="InterPro" id="IPR013765">
    <property type="entry name" value="DNA_recomb/repair_RecA"/>
</dbReference>
<dbReference type="InterPro" id="IPR020584">
    <property type="entry name" value="DNA_recomb/repair_RecA_CS"/>
</dbReference>
<dbReference type="InterPro" id="IPR027417">
    <property type="entry name" value="P-loop_NTPase"/>
</dbReference>
<dbReference type="InterPro" id="IPR049261">
    <property type="entry name" value="RecA-like_C"/>
</dbReference>
<dbReference type="InterPro" id="IPR049428">
    <property type="entry name" value="RecA-like_N"/>
</dbReference>
<dbReference type="InterPro" id="IPR020588">
    <property type="entry name" value="RecA_ATP-bd"/>
</dbReference>
<dbReference type="InterPro" id="IPR023400">
    <property type="entry name" value="RecA_C_sf"/>
</dbReference>
<dbReference type="InterPro" id="IPR020587">
    <property type="entry name" value="RecA_monomer-monomer_interface"/>
</dbReference>
<dbReference type="NCBIfam" id="TIGR02012">
    <property type="entry name" value="tigrfam_recA"/>
    <property type="match status" value="1"/>
</dbReference>
<dbReference type="PANTHER" id="PTHR45900:SF1">
    <property type="entry name" value="MITOCHONDRIAL DNA REPAIR PROTEIN RECA HOMOLOG-RELATED"/>
    <property type="match status" value="1"/>
</dbReference>
<dbReference type="PANTHER" id="PTHR45900">
    <property type="entry name" value="RECA"/>
    <property type="match status" value="1"/>
</dbReference>
<dbReference type="Pfam" id="PF00154">
    <property type="entry name" value="RecA"/>
    <property type="match status" value="1"/>
</dbReference>
<dbReference type="Pfam" id="PF21096">
    <property type="entry name" value="RecA_C"/>
    <property type="match status" value="1"/>
</dbReference>
<dbReference type="PRINTS" id="PR00142">
    <property type="entry name" value="RECA"/>
</dbReference>
<dbReference type="SMART" id="SM00382">
    <property type="entry name" value="AAA"/>
    <property type="match status" value="1"/>
</dbReference>
<dbReference type="SUPFAM" id="SSF52540">
    <property type="entry name" value="P-loop containing nucleoside triphosphate hydrolases"/>
    <property type="match status" value="1"/>
</dbReference>
<dbReference type="SUPFAM" id="SSF54752">
    <property type="entry name" value="RecA protein, C-terminal domain"/>
    <property type="match status" value="1"/>
</dbReference>
<dbReference type="PROSITE" id="PS00321">
    <property type="entry name" value="RECA_1"/>
    <property type="match status" value="1"/>
</dbReference>
<dbReference type="PROSITE" id="PS50162">
    <property type="entry name" value="RECA_2"/>
    <property type="match status" value="1"/>
</dbReference>
<dbReference type="PROSITE" id="PS50163">
    <property type="entry name" value="RECA_3"/>
    <property type="match status" value="1"/>
</dbReference>
<proteinExistence type="inferred from homology"/>
<accession>Q3AUV9</accession>
<organism>
    <name type="scientific">Synechococcus sp. (strain CC9902)</name>
    <dbReference type="NCBI Taxonomy" id="316279"/>
    <lineage>
        <taxon>Bacteria</taxon>
        <taxon>Bacillati</taxon>
        <taxon>Cyanobacteriota</taxon>
        <taxon>Cyanophyceae</taxon>
        <taxon>Synechococcales</taxon>
        <taxon>Synechococcaceae</taxon>
        <taxon>Synechococcus</taxon>
    </lineage>
</organism>
<gene>
    <name evidence="1" type="primary">recA</name>
    <name type="ordered locus">Syncc9902_1949</name>
</gene>
<comment type="function">
    <text evidence="1">Can catalyze the hydrolysis of ATP in the presence of single-stranded DNA, the ATP-dependent uptake of single-stranded DNA by duplex DNA, and the ATP-dependent hybridization of homologous single-stranded DNAs. It interacts with LexA causing its activation and leading to its autocatalytic cleavage.</text>
</comment>
<comment type="subcellular location">
    <subcellularLocation>
        <location evidence="1">Cytoplasm</location>
    </subcellularLocation>
</comment>
<comment type="similarity">
    <text evidence="1">Belongs to the RecA family.</text>
</comment>